<gene>
    <name evidence="1" type="primary">lipA</name>
    <name type="ordered locus">BcerKBAB4_4796</name>
</gene>
<sequence length="298" mass="33716">MTKQTEYKRKPEWLKIKLNTNENYTGLKKMMRSKNLHTVCEEAKCPNIHECWAVRKTATFMILGAVCTRACRFCAVKTGLPTELDLQEPERVADSVVQMGLKHVVITAVARDDLKDGGAAVFAETVRAVRRENPFTSIEVLPSDMGGVEENLKMLMDAKPDILNHNIETVRRLSNRVRARAKYDRSLEFLRRAKEMQPDIPTKSSIMLGLGETREDLIEAMDDLRANNVDILTLGQYLQPSKKHLPVIKYYPPAEFAELKEIALSKGFSHCEAGPLVRSSYHADEQVRSAKEKTAEAK</sequence>
<reference key="1">
    <citation type="journal article" date="2008" name="Chem. Biol. Interact.">
        <title>Extending the Bacillus cereus group genomics to putative food-borne pathogens of different toxicity.</title>
        <authorList>
            <person name="Lapidus A."/>
            <person name="Goltsman E."/>
            <person name="Auger S."/>
            <person name="Galleron N."/>
            <person name="Segurens B."/>
            <person name="Dossat C."/>
            <person name="Land M.L."/>
            <person name="Broussolle V."/>
            <person name="Brillard J."/>
            <person name="Guinebretiere M.-H."/>
            <person name="Sanchis V."/>
            <person name="Nguen-the C."/>
            <person name="Lereclus D."/>
            <person name="Richardson P."/>
            <person name="Wincker P."/>
            <person name="Weissenbach J."/>
            <person name="Ehrlich S.D."/>
            <person name="Sorokin A."/>
        </authorList>
    </citation>
    <scope>NUCLEOTIDE SEQUENCE [LARGE SCALE GENOMIC DNA]</scope>
    <source>
        <strain>KBAB4</strain>
    </source>
</reference>
<accession>A9VNX6</accession>
<proteinExistence type="inferred from homology"/>
<feature type="chain" id="PRO_1000099589" description="Lipoyl synthase">
    <location>
        <begin position="1"/>
        <end position="298"/>
    </location>
</feature>
<feature type="domain" description="Radical SAM core" evidence="2">
    <location>
        <begin position="53"/>
        <end position="269"/>
    </location>
</feature>
<feature type="binding site" evidence="1">
    <location>
        <position position="40"/>
    </location>
    <ligand>
        <name>[4Fe-4S] cluster</name>
        <dbReference type="ChEBI" id="CHEBI:49883"/>
        <label>1</label>
    </ligand>
</feature>
<feature type="binding site" evidence="1">
    <location>
        <position position="45"/>
    </location>
    <ligand>
        <name>[4Fe-4S] cluster</name>
        <dbReference type="ChEBI" id="CHEBI:49883"/>
        <label>1</label>
    </ligand>
</feature>
<feature type="binding site" evidence="1">
    <location>
        <position position="51"/>
    </location>
    <ligand>
        <name>[4Fe-4S] cluster</name>
        <dbReference type="ChEBI" id="CHEBI:49883"/>
        <label>1</label>
    </ligand>
</feature>
<feature type="binding site" evidence="1">
    <location>
        <position position="67"/>
    </location>
    <ligand>
        <name>[4Fe-4S] cluster</name>
        <dbReference type="ChEBI" id="CHEBI:49883"/>
        <label>2</label>
        <note>4Fe-4S-S-AdoMet</note>
    </ligand>
</feature>
<feature type="binding site" evidence="1">
    <location>
        <position position="71"/>
    </location>
    <ligand>
        <name>[4Fe-4S] cluster</name>
        <dbReference type="ChEBI" id="CHEBI:49883"/>
        <label>2</label>
        <note>4Fe-4S-S-AdoMet</note>
    </ligand>
</feature>
<feature type="binding site" evidence="1">
    <location>
        <position position="74"/>
    </location>
    <ligand>
        <name>[4Fe-4S] cluster</name>
        <dbReference type="ChEBI" id="CHEBI:49883"/>
        <label>2</label>
        <note>4Fe-4S-S-AdoMet</note>
    </ligand>
</feature>
<feature type="binding site" evidence="1">
    <location>
        <position position="280"/>
    </location>
    <ligand>
        <name>[4Fe-4S] cluster</name>
        <dbReference type="ChEBI" id="CHEBI:49883"/>
        <label>1</label>
    </ligand>
</feature>
<protein>
    <recommendedName>
        <fullName evidence="1">Lipoyl synthase</fullName>
        <ecNumber evidence="1">2.8.1.8</ecNumber>
    </recommendedName>
    <alternativeName>
        <fullName evidence="1">Lip-syn</fullName>
        <shortName evidence="1">LS</shortName>
    </alternativeName>
    <alternativeName>
        <fullName evidence="1">Lipoate synthase</fullName>
    </alternativeName>
    <alternativeName>
        <fullName evidence="1">Lipoic acid synthase</fullName>
    </alternativeName>
    <alternativeName>
        <fullName evidence="1">Sulfur insertion protein LipA</fullName>
    </alternativeName>
</protein>
<keyword id="KW-0004">4Fe-4S</keyword>
<keyword id="KW-0963">Cytoplasm</keyword>
<keyword id="KW-0408">Iron</keyword>
<keyword id="KW-0411">Iron-sulfur</keyword>
<keyword id="KW-0479">Metal-binding</keyword>
<keyword id="KW-0949">S-adenosyl-L-methionine</keyword>
<keyword id="KW-0808">Transferase</keyword>
<comment type="function">
    <text evidence="1">Catalyzes the radical-mediated insertion of two sulfur atoms into the C-6 and C-8 positions of the octanoyl moiety bound to the lipoyl domains of lipoate-dependent enzymes, thereby converting the octanoylated domains into lipoylated derivatives.</text>
</comment>
<comment type="catalytic activity">
    <reaction evidence="1">
        <text>[[Fe-S] cluster scaffold protein carrying a second [4Fe-4S](2+) cluster] + N(6)-octanoyl-L-lysyl-[protein] + 2 oxidized [2Fe-2S]-[ferredoxin] + 2 S-adenosyl-L-methionine + 4 H(+) = [[Fe-S] cluster scaffold protein] + N(6)-[(R)-dihydrolipoyl]-L-lysyl-[protein] + 4 Fe(3+) + 2 hydrogen sulfide + 2 5'-deoxyadenosine + 2 L-methionine + 2 reduced [2Fe-2S]-[ferredoxin]</text>
        <dbReference type="Rhea" id="RHEA:16585"/>
        <dbReference type="Rhea" id="RHEA-COMP:9928"/>
        <dbReference type="Rhea" id="RHEA-COMP:10000"/>
        <dbReference type="Rhea" id="RHEA-COMP:10001"/>
        <dbReference type="Rhea" id="RHEA-COMP:10475"/>
        <dbReference type="Rhea" id="RHEA-COMP:14568"/>
        <dbReference type="Rhea" id="RHEA-COMP:14569"/>
        <dbReference type="ChEBI" id="CHEBI:15378"/>
        <dbReference type="ChEBI" id="CHEBI:17319"/>
        <dbReference type="ChEBI" id="CHEBI:29034"/>
        <dbReference type="ChEBI" id="CHEBI:29919"/>
        <dbReference type="ChEBI" id="CHEBI:33722"/>
        <dbReference type="ChEBI" id="CHEBI:33737"/>
        <dbReference type="ChEBI" id="CHEBI:33738"/>
        <dbReference type="ChEBI" id="CHEBI:57844"/>
        <dbReference type="ChEBI" id="CHEBI:59789"/>
        <dbReference type="ChEBI" id="CHEBI:78809"/>
        <dbReference type="ChEBI" id="CHEBI:83100"/>
        <dbReference type="EC" id="2.8.1.8"/>
    </reaction>
</comment>
<comment type="cofactor">
    <cofactor evidence="1">
        <name>[4Fe-4S] cluster</name>
        <dbReference type="ChEBI" id="CHEBI:49883"/>
    </cofactor>
    <text evidence="1">Binds 2 [4Fe-4S] clusters per subunit. One cluster is coordinated with 3 cysteines and an exchangeable S-adenosyl-L-methionine.</text>
</comment>
<comment type="pathway">
    <text evidence="1">Protein modification; protein lipoylation via endogenous pathway; protein N(6)-(lipoyl)lysine from octanoyl-[acyl-carrier-protein].</text>
</comment>
<comment type="subcellular location">
    <subcellularLocation>
        <location evidence="1">Cytoplasm</location>
    </subcellularLocation>
</comment>
<comment type="similarity">
    <text evidence="1">Belongs to the radical SAM superfamily. Lipoyl synthase family.</text>
</comment>
<evidence type="ECO:0000255" key="1">
    <source>
        <dbReference type="HAMAP-Rule" id="MF_00206"/>
    </source>
</evidence>
<evidence type="ECO:0000255" key="2">
    <source>
        <dbReference type="PROSITE-ProRule" id="PRU01266"/>
    </source>
</evidence>
<dbReference type="EC" id="2.8.1.8" evidence="1"/>
<dbReference type="EMBL" id="CP000903">
    <property type="protein sequence ID" value="ABY45945.1"/>
    <property type="molecule type" value="Genomic_DNA"/>
</dbReference>
<dbReference type="RefSeq" id="WP_002034580.1">
    <property type="nucleotide sequence ID" value="NC_010184.1"/>
</dbReference>
<dbReference type="SMR" id="A9VNX6"/>
<dbReference type="KEGG" id="bwe:BcerKBAB4_4796"/>
<dbReference type="eggNOG" id="COG0320">
    <property type="taxonomic scope" value="Bacteria"/>
</dbReference>
<dbReference type="HOGENOM" id="CLU_033144_2_1_9"/>
<dbReference type="Proteomes" id="UP000002154">
    <property type="component" value="Chromosome"/>
</dbReference>
<dbReference type="GO" id="GO:0005737">
    <property type="term" value="C:cytoplasm"/>
    <property type="evidence" value="ECO:0007669"/>
    <property type="project" value="UniProtKB-SubCell"/>
</dbReference>
<dbReference type="GO" id="GO:0051539">
    <property type="term" value="F:4 iron, 4 sulfur cluster binding"/>
    <property type="evidence" value="ECO:0007669"/>
    <property type="project" value="UniProtKB-UniRule"/>
</dbReference>
<dbReference type="GO" id="GO:0016992">
    <property type="term" value="F:lipoate synthase activity"/>
    <property type="evidence" value="ECO:0007669"/>
    <property type="project" value="UniProtKB-UniRule"/>
</dbReference>
<dbReference type="GO" id="GO:0046872">
    <property type="term" value="F:metal ion binding"/>
    <property type="evidence" value="ECO:0007669"/>
    <property type="project" value="UniProtKB-KW"/>
</dbReference>
<dbReference type="CDD" id="cd01335">
    <property type="entry name" value="Radical_SAM"/>
    <property type="match status" value="1"/>
</dbReference>
<dbReference type="FunFam" id="3.20.20.70:FF:000040">
    <property type="entry name" value="Lipoyl synthase"/>
    <property type="match status" value="1"/>
</dbReference>
<dbReference type="Gene3D" id="3.20.20.70">
    <property type="entry name" value="Aldolase class I"/>
    <property type="match status" value="1"/>
</dbReference>
<dbReference type="HAMAP" id="MF_00206">
    <property type="entry name" value="Lipoyl_synth"/>
    <property type="match status" value="1"/>
</dbReference>
<dbReference type="InterPro" id="IPR013785">
    <property type="entry name" value="Aldolase_TIM"/>
</dbReference>
<dbReference type="InterPro" id="IPR006638">
    <property type="entry name" value="Elp3/MiaA/NifB-like_rSAM"/>
</dbReference>
<dbReference type="InterPro" id="IPR031691">
    <property type="entry name" value="LIAS_N"/>
</dbReference>
<dbReference type="InterPro" id="IPR003698">
    <property type="entry name" value="Lipoyl_synth"/>
</dbReference>
<dbReference type="InterPro" id="IPR007197">
    <property type="entry name" value="rSAM"/>
</dbReference>
<dbReference type="NCBIfam" id="TIGR00510">
    <property type="entry name" value="lipA"/>
    <property type="match status" value="1"/>
</dbReference>
<dbReference type="NCBIfam" id="NF004019">
    <property type="entry name" value="PRK05481.1"/>
    <property type="match status" value="1"/>
</dbReference>
<dbReference type="NCBIfam" id="NF009544">
    <property type="entry name" value="PRK12928.1"/>
    <property type="match status" value="1"/>
</dbReference>
<dbReference type="PANTHER" id="PTHR10949">
    <property type="entry name" value="LIPOYL SYNTHASE"/>
    <property type="match status" value="1"/>
</dbReference>
<dbReference type="PANTHER" id="PTHR10949:SF0">
    <property type="entry name" value="LIPOYL SYNTHASE, MITOCHONDRIAL"/>
    <property type="match status" value="1"/>
</dbReference>
<dbReference type="Pfam" id="PF16881">
    <property type="entry name" value="LIAS_N"/>
    <property type="match status" value="1"/>
</dbReference>
<dbReference type="Pfam" id="PF04055">
    <property type="entry name" value="Radical_SAM"/>
    <property type="match status" value="1"/>
</dbReference>
<dbReference type="PIRSF" id="PIRSF005963">
    <property type="entry name" value="Lipoyl_synth"/>
    <property type="match status" value="1"/>
</dbReference>
<dbReference type="SFLD" id="SFLDF00271">
    <property type="entry name" value="lipoyl_synthase"/>
    <property type="match status" value="1"/>
</dbReference>
<dbReference type="SFLD" id="SFLDG01058">
    <property type="entry name" value="lipoyl_synthase_like"/>
    <property type="match status" value="1"/>
</dbReference>
<dbReference type="SMART" id="SM00729">
    <property type="entry name" value="Elp3"/>
    <property type="match status" value="1"/>
</dbReference>
<dbReference type="SUPFAM" id="SSF102114">
    <property type="entry name" value="Radical SAM enzymes"/>
    <property type="match status" value="1"/>
</dbReference>
<dbReference type="PROSITE" id="PS51918">
    <property type="entry name" value="RADICAL_SAM"/>
    <property type="match status" value="1"/>
</dbReference>
<organism>
    <name type="scientific">Bacillus mycoides (strain KBAB4)</name>
    <name type="common">Bacillus weihenstephanensis</name>
    <dbReference type="NCBI Taxonomy" id="315730"/>
    <lineage>
        <taxon>Bacteria</taxon>
        <taxon>Bacillati</taxon>
        <taxon>Bacillota</taxon>
        <taxon>Bacilli</taxon>
        <taxon>Bacillales</taxon>
        <taxon>Bacillaceae</taxon>
        <taxon>Bacillus</taxon>
        <taxon>Bacillus cereus group</taxon>
    </lineage>
</organism>
<name>LIPA_BACMK</name>